<gene>
    <name evidence="2" type="primary">ZNF475</name>
</gene>
<feature type="chain" id="PRO_0000458824" description="Zinc finger protein 475">
    <location>
        <begin position="1"/>
        <end position="108"/>
    </location>
</feature>
<feature type="zinc finger region" description="C2HC/C3H-type 1" evidence="1">
    <location>
        <begin position="6"/>
        <end position="35"/>
    </location>
</feature>
<feature type="zinc finger region" description="C2HC/C3H-type 2" evidence="1">
    <location>
        <begin position="79"/>
        <end position="108"/>
    </location>
</feature>
<feature type="binding site" evidence="1">
    <location>
        <position position="10"/>
    </location>
    <ligand>
        <name>Zn(2+)</name>
        <dbReference type="ChEBI" id="CHEBI:29105"/>
        <label>1</label>
    </ligand>
</feature>
<feature type="binding site" evidence="1">
    <location>
        <position position="13"/>
    </location>
    <ligand>
        <name>Zn(2+)</name>
        <dbReference type="ChEBI" id="CHEBI:29105"/>
        <label>1</label>
    </ligand>
</feature>
<feature type="binding site" evidence="1">
    <location>
        <position position="25"/>
    </location>
    <ligand>
        <name>Zn(2+)</name>
        <dbReference type="ChEBI" id="CHEBI:29105"/>
        <label>1</label>
    </ligand>
</feature>
<feature type="binding site" evidence="1">
    <location>
        <position position="29"/>
    </location>
    <ligand>
        <name>Zn(2+)</name>
        <dbReference type="ChEBI" id="CHEBI:29105"/>
        <label>1</label>
    </ligand>
</feature>
<feature type="binding site" evidence="1">
    <location>
        <position position="83"/>
    </location>
    <ligand>
        <name>Zn(2+)</name>
        <dbReference type="ChEBI" id="CHEBI:29105"/>
        <label>2</label>
    </ligand>
</feature>
<feature type="binding site" evidence="1">
    <location>
        <position position="86"/>
    </location>
    <ligand>
        <name>Zn(2+)</name>
        <dbReference type="ChEBI" id="CHEBI:29105"/>
        <label>2</label>
    </ligand>
</feature>
<feature type="binding site" evidence="1">
    <location>
        <position position="98"/>
    </location>
    <ligand>
        <name>Zn(2+)</name>
        <dbReference type="ChEBI" id="CHEBI:29105"/>
        <label>2</label>
    </ligand>
</feature>
<feature type="binding site" evidence="1">
    <location>
        <position position="102"/>
    </location>
    <ligand>
        <name>Zn(2+)</name>
        <dbReference type="ChEBI" id="CHEBI:29105"/>
        <label>2</label>
    </ligand>
</feature>
<sequence length="108" mass="12335">MIRRPPAVVCYICGREYGTKSISIHEPQCLKKWHNENNLLPKELRRPVPKKPEVRTITAKGFYDLDALNEAAWTSAHSQLVPCNVCGRTFLPDRLIVHQRSCKPKAAK</sequence>
<accession>A0A1B0GTH9</accession>
<organism>
    <name type="scientific">Homo sapiens</name>
    <name type="common">Human</name>
    <dbReference type="NCBI Taxonomy" id="9606"/>
    <lineage>
        <taxon>Eukaryota</taxon>
        <taxon>Metazoa</taxon>
        <taxon>Chordata</taxon>
        <taxon>Craniata</taxon>
        <taxon>Vertebrata</taxon>
        <taxon>Euteleostomi</taxon>
        <taxon>Mammalia</taxon>
        <taxon>Eutheria</taxon>
        <taxon>Euarchontoglires</taxon>
        <taxon>Primates</taxon>
        <taxon>Haplorrhini</taxon>
        <taxon>Catarrhini</taxon>
        <taxon>Hominidae</taxon>
        <taxon>Homo</taxon>
    </lineage>
</organism>
<proteinExistence type="evidence at protein level"/>
<evidence type="ECO:0000255" key="1">
    <source>
        <dbReference type="PROSITE-ProRule" id="PRU01371"/>
    </source>
</evidence>
<evidence type="ECO:0000312" key="2">
    <source>
        <dbReference type="HGNC" id="HGNC:53564"/>
    </source>
</evidence>
<name>ZN475_HUMAN</name>
<comment type="cofactor">
    <cofactor evidence="1">
        <name>Zn(2+)</name>
        <dbReference type="ChEBI" id="CHEBI:29105"/>
    </cofactor>
</comment>
<dbReference type="EMBL" id="AC010255">
    <property type="status" value="NOT_ANNOTATED_CDS"/>
    <property type="molecule type" value="Genomic_DNA"/>
</dbReference>
<dbReference type="CCDS" id="CCDS93768.1"/>
<dbReference type="RefSeq" id="NP_001182464.2">
    <property type="nucleotide sequence ID" value="NM_001195535.4"/>
</dbReference>
<dbReference type="STRING" id="9606.ENSP00000489710"/>
<dbReference type="BioMuta" id="ENSG00000250803"/>
<dbReference type="MassIVE" id="A0A1B0GTH9"/>
<dbReference type="PeptideAtlas" id="A0A1B0GTH9"/>
<dbReference type="Ensembl" id="ENST00000509403.7">
    <property type="protein sequence ID" value="ENSP00000489710.1"/>
    <property type="gene ID" value="ENSG00000250803.7"/>
</dbReference>
<dbReference type="GeneID" id="100505841"/>
<dbReference type="MANE-Select" id="ENST00000509403.7">
    <property type="protein sequence ID" value="ENSP00000489710.1"/>
    <property type="RefSeq nucleotide sequence ID" value="NM_001195535.4"/>
    <property type="RefSeq protein sequence ID" value="NP_001182464.2"/>
</dbReference>
<dbReference type="AGR" id="HGNC:53564"/>
<dbReference type="GeneCards" id="ZNF475"/>
<dbReference type="HGNC" id="HGNC:53564">
    <property type="gene designation" value="ZNF475"/>
</dbReference>
<dbReference type="OpenTargets" id="ENSG00000250803"/>
<dbReference type="VEuPathDB" id="HostDB:ENSG00000250803"/>
<dbReference type="GeneTree" id="ENSGT00530000064208"/>
<dbReference type="InParanoid" id="A0A1B0GTH9"/>
<dbReference type="OMA" id="SQGLMVE"/>
<dbReference type="OrthoDB" id="265955at2759"/>
<dbReference type="PAN-GO" id="A0A1B0GTH9">
    <property type="GO annotations" value="0 GO annotations based on evolutionary models"/>
</dbReference>
<dbReference type="PRO" id="PR:A0A1B0GTH9"/>
<dbReference type="Proteomes" id="UP000005640">
    <property type="component" value="Chromosome 5"/>
</dbReference>
<dbReference type="RNAct" id="A0A1B0GTH9">
    <property type="molecule type" value="protein"/>
</dbReference>
<dbReference type="Bgee" id="ENSG00000250803">
    <property type="expression patterns" value="Expressed in sperm and 89 other cell types or tissues"/>
</dbReference>
<dbReference type="ExpressionAtlas" id="A0A1B0GTH9">
    <property type="expression patterns" value="baseline and differential"/>
</dbReference>
<dbReference type="GO" id="GO:0008270">
    <property type="term" value="F:zinc ion binding"/>
    <property type="evidence" value="ECO:0007669"/>
    <property type="project" value="UniProtKB-KW"/>
</dbReference>
<dbReference type="Gene3D" id="3.30.160.60">
    <property type="entry name" value="Classic Zinc Finger"/>
    <property type="match status" value="2"/>
</dbReference>
<dbReference type="InterPro" id="IPR026319">
    <property type="entry name" value="ZC2HC1A/B-like"/>
</dbReference>
<dbReference type="InterPro" id="IPR049899">
    <property type="entry name" value="Znf_C2HC_C3H"/>
</dbReference>
<dbReference type="PANTHER" id="PTHR13555">
    <property type="entry name" value="C2H2 ZINC FINGER CGI-62-RELATED"/>
    <property type="match status" value="1"/>
</dbReference>
<dbReference type="PANTHER" id="PTHR13555:SF66">
    <property type="entry name" value="ZINC FINGER PROTEIN 474"/>
    <property type="match status" value="1"/>
</dbReference>
<dbReference type="Pfam" id="PF13913">
    <property type="entry name" value="zf-C2HC_2"/>
    <property type="match status" value="2"/>
</dbReference>
<dbReference type="PROSITE" id="PS52027">
    <property type="entry name" value="ZF_C2HC_C3H"/>
    <property type="match status" value="2"/>
</dbReference>
<keyword id="KW-0479">Metal-binding</keyword>
<keyword id="KW-1267">Proteomics identification</keyword>
<keyword id="KW-1185">Reference proteome</keyword>
<keyword id="KW-0677">Repeat</keyword>
<keyword id="KW-0862">Zinc</keyword>
<keyword id="KW-0863">Zinc-finger</keyword>
<reference key="1">
    <citation type="journal article" date="2004" name="Nature">
        <title>The DNA sequence and comparative analysis of human chromosome 5.</title>
        <authorList>
            <person name="Schmutz J."/>
            <person name="Martin J."/>
            <person name="Terry A."/>
            <person name="Couronne O."/>
            <person name="Grimwood J."/>
            <person name="Lowry S."/>
            <person name="Gordon L.A."/>
            <person name="Scott D."/>
            <person name="Xie G."/>
            <person name="Huang W."/>
            <person name="Hellsten U."/>
            <person name="Tran-Gyamfi M."/>
            <person name="She X."/>
            <person name="Prabhakar S."/>
            <person name="Aerts A."/>
            <person name="Altherr M."/>
            <person name="Bajorek E."/>
            <person name="Black S."/>
            <person name="Branscomb E."/>
            <person name="Caoile C."/>
            <person name="Challacombe J.F."/>
            <person name="Chan Y.M."/>
            <person name="Denys M."/>
            <person name="Detter J.C."/>
            <person name="Escobar J."/>
            <person name="Flowers D."/>
            <person name="Fotopulos D."/>
            <person name="Glavina T."/>
            <person name="Gomez M."/>
            <person name="Gonzales E."/>
            <person name="Goodstein D."/>
            <person name="Grigoriev I."/>
            <person name="Groza M."/>
            <person name="Hammon N."/>
            <person name="Hawkins T."/>
            <person name="Haydu L."/>
            <person name="Israni S."/>
            <person name="Jett J."/>
            <person name="Kadner K."/>
            <person name="Kimball H."/>
            <person name="Kobayashi A."/>
            <person name="Lopez F."/>
            <person name="Lou Y."/>
            <person name="Martinez D."/>
            <person name="Medina C."/>
            <person name="Morgan J."/>
            <person name="Nandkeshwar R."/>
            <person name="Noonan J.P."/>
            <person name="Pitluck S."/>
            <person name="Pollard M."/>
            <person name="Predki P."/>
            <person name="Priest J."/>
            <person name="Ramirez L."/>
            <person name="Retterer J."/>
            <person name="Rodriguez A."/>
            <person name="Rogers S."/>
            <person name="Salamov A."/>
            <person name="Salazar A."/>
            <person name="Thayer N."/>
            <person name="Tice H."/>
            <person name="Tsai M."/>
            <person name="Ustaszewska A."/>
            <person name="Vo N."/>
            <person name="Wheeler J."/>
            <person name="Wu K."/>
            <person name="Yang J."/>
            <person name="Dickson M."/>
            <person name="Cheng J.-F."/>
            <person name="Eichler E.E."/>
            <person name="Olsen A."/>
            <person name="Pennacchio L.A."/>
            <person name="Rokhsar D.S."/>
            <person name="Richardson P."/>
            <person name="Lucas S.M."/>
            <person name="Myers R.M."/>
            <person name="Rubin E.M."/>
        </authorList>
    </citation>
    <scope>NUCLEOTIDE SEQUENCE [LARGE SCALE GENOMIC DNA]</scope>
</reference>
<protein>
    <recommendedName>
        <fullName>Zinc finger protein 475</fullName>
    </recommendedName>
</protein>